<sequence>MAELATIARPYAEALFQSAKPAELAGCLEQLNELAQLAALPEVAALSNNPKVSADDLSKLLSGMVKTKLDGKVASFLNLINQNHRLAAVPEIAHQFEAMKNKSEGAAEVSITSAFPLEGSALNDLLSSLKKRFGGKELRPTIQVDPTLIGGVRIQVGDEVMDSSVKAQLAQMQASLGA</sequence>
<evidence type="ECO:0000255" key="1">
    <source>
        <dbReference type="HAMAP-Rule" id="MF_01416"/>
    </source>
</evidence>
<organism>
    <name type="scientific">Polynucleobacter asymbioticus (strain DSM 18221 / CIP 109841 / QLW-P1DMWA-1)</name>
    <name type="common">Polynucleobacter necessarius subsp. asymbioticus</name>
    <dbReference type="NCBI Taxonomy" id="312153"/>
    <lineage>
        <taxon>Bacteria</taxon>
        <taxon>Pseudomonadati</taxon>
        <taxon>Pseudomonadota</taxon>
        <taxon>Betaproteobacteria</taxon>
        <taxon>Burkholderiales</taxon>
        <taxon>Burkholderiaceae</taxon>
        <taxon>Polynucleobacter</taxon>
    </lineage>
</organism>
<feature type="chain" id="PRO_0000371058" description="ATP synthase subunit delta">
    <location>
        <begin position="1"/>
        <end position="178"/>
    </location>
</feature>
<name>ATPD_POLAQ</name>
<gene>
    <name evidence="1" type="primary">atpH</name>
    <name type="ordered locus">Pnuc_0023</name>
</gene>
<keyword id="KW-0066">ATP synthesis</keyword>
<keyword id="KW-1003">Cell membrane</keyword>
<keyword id="KW-0139">CF(1)</keyword>
<keyword id="KW-0375">Hydrogen ion transport</keyword>
<keyword id="KW-0406">Ion transport</keyword>
<keyword id="KW-0472">Membrane</keyword>
<keyword id="KW-1185">Reference proteome</keyword>
<keyword id="KW-0813">Transport</keyword>
<accession>A4SUT1</accession>
<comment type="function">
    <text evidence="1">F(1)F(0) ATP synthase produces ATP from ADP in the presence of a proton or sodium gradient. F-type ATPases consist of two structural domains, F(1) containing the extramembraneous catalytic core and F(0) containing the membrane proton channel, linked together by a central stalk and a peripheral stalk. During catalysis, ATP synthesis in the catalytic domain of F(1) is coupled via a rotary mechanism of the central stalk subunits to proton translocation.</text>
</comment>
<comment type="function">
    <text evidence="1">This protein is part of the stalk that links CF(0) to CF(1). It either transmits conformational changes from CF(0) to CF(1) or is implicated in proton conduction.</text>
</comment>
<comment type="subunit">
    <text evidence="1">F-type ATPases have 2 components, F(1) - the catalytic core - and F(0) - the membrane proton channel. F(1) has five subunits: alpha(3), beta(3), gamma(1), delta(1), epsilon(1). F(0) has three main subunits: a(1), b(2) and c(10-14). The alpha and beta chains form an alternating ring which encloses part of the gamma chain. F(1) is attached to F(0) by a central stalk formed by the gamma and epsilon chains, while a peripheral stalk is formed by the delta and b chains.</text>
</comment>
<comment type="subcellular location">
    <subcellularLocation>
        <location evidence="1">Cell membrane</location>
        <topology evidence="1">Peripheral membrane protein</topology>
    </subcellularLocation>
</comment>
<comment type="similarity">
    <text evidence="1">Belongs to the ATPase delta chain family.</text>
</comment>
<dbReference type="EMBL" id="CP000655">
    <property type="protein sequence ID" value="ABP33245.1"/>
    <property type="molecule type" value="Genomic_DNA"/>
</dbReference>
<dbReference type="RefSeq" id="WP_011901871.1">
    <property type="nucleotide sequence ID" value="NC_009379.1"/>
</dbReference>
<dbReference type="SMR" id="A4SUT1"/>
<dbReference type="GeneID" id="31480359"/>
<dbReference type="KEGG" id="pnu:Pnuc_0023"/>
<dbReference type="eggNOG" id="COG0712">
    <property type="taxonomic scope" value="Bacteria"/>
</dbReference>
<dbReference type="HOGENOM" id="CLU_085114_3_0_4"/>
<dbReference type="Proteomes" id="UP000000231">
    <property type="component" value="Chromosome"/>
</dbReference>
<dbReference type="GO" id="GO:0005886">
    <property type="term" value="C:plasma membrane"/>
    <property type="evidence" value="ECO:0007669"/>
    <property type="project" value="UniProtKB-SubCell"/>
</dbReference>
<dbReference type="GO" id="GO:0045259">
    <property type="term" value="C:proton-transporting ATP synthase complex"/>
    <property type="evidence" value="ECO:0007669"/>
    <property type="project" value="UniProtKB-KW"/>
</dbReference>
<dbReference type="GO" id="GO:0046933">
    <property type="term" value="F:proton-transporting ATP synthase activity, rotational mechanism"/>
    <property type="evidence" value="ECO:0007669"/>
    <property type="project" value="UniProtKB-UniRule"/>
</dbReference>
<dbReference type="Gene3D" id="1.10.520.20">
    <property type="entry name" value="N-terminal domain of the delta subunit of the F1F0-ATP synthase"/>
    <property type="match status" value="1"/>
</dbReference>
<dbReference type="HAMAP" id="MF_01416">
    <property type="entry name" value="ATP_synth_delta_bact"/>
    <property type="match status" value="1"/>
</dbReference>
<dbReference type="InterPro" id="IPR026015">
    <property type="entry name" value="ATP_synth_OSCP/delta_N_sf"/>
</dbReference>
<dbReference type="InterPro" id="IPR000711">
    <property type="entry name" value="ATPase_OSCP/dsu"/>
</dbReference>
<dbReference type="NCBIfam" id="TIGR01145">
    <property type="entry name" value="ATP_synt_delta"/>
    <property type="match status" value="1"/>
</dbReference>
<dbReference type="NCBIfam" id="NF004402">
    <property type="entry name" value="PRK05758.2-2"/>
    <property type="match status" value="1"/>
</dbReference>
<dbReference type="PANTHER" id="PTHR11910">
    <property type="entry name" value="ATP SYNTHASE DELTA CHAIN"/>
    <property type="match status" value="1"/>
</dbReference>
<dbReference type="Pfam" id="PF00213">
    <property type="entry name" value="OSCP"/>
    <property type="match status" value="1"/>
</dbReference>
<dbReference type="PRINTS" id="PR00125">
    <property type="entry name" value="ATPASEDELTA"/>
</dbReference>
<dbReference type="SUPFAM" id="SSF47928">
    <property type="entry name" value="N-terminal domain of the delta subunit of the F1F0-ATP synthase"/>
    <property type="match status" value="1"/>
</dbReference>
<protein>
    <recommendedName>
        <fullName evidence="1">ATP synthase subunit delta</fullName>
    </recommendedName>
    <alternativeName>
        <fullName evidence="1">ATP synthase F(1) sector subunit delta</fullName>
    </alternativeName>
    <alternativeName>
        <fullName evidence="1">F-type ATPase subunit delta</fullName>
        <shortName evidence="1">F-ATPase subunit delta</shortName>
    </alternativeName>
</protein>
<proteinExistence type="inferred from homology"/>
<reference key="1">
    <citation type="journal article" date="2012" name="Stand. Genomic Sci.">
        <title>Complete genome sequence of Polynucleobacter necessarius subsp. asymbioticus type strain (QLW-P1DMWA-1(T)).</title>
        <authorList>
            <person name="Meincke L."/>
            <person name="Copeland A."/>
            <person name="Lapidus A."/>
            <person name="Lucas S."/>
            <person name="Berry K.W."/>
            <person name="Del Rio T.G."/>
            <person name="Hammon N."/>
            <person name="Dalin E."/>
            <person name="Tice H."/>
            <person name="Pitluck S."/>
            <person name="Richardson P."/>
            <person name="Bruce D."/>
            <person name="Goodwin L."/>
            <person name="Han C."/>
            <person name="Tapia R."/>
            <person name="Detter J.C."/>
            <person name="Schmutz J."/>
            <person name="Brettin T."/>
            <person name="Larimer F."/>
            <person name="Land M."/>
            <person name="Hauser L."/>
            <person name="Kyrpides N.C."/>
            <person name="Ivanova N."/>
            <person name="Goker M."/>
            <person name="Woyke T."/>
            <person name="Wu Q.L."/>
            <person name="Pockl M."/>
            <person name="Hahn M.W."/>
            <person name="Klenk H.P."/>
        </authorList>
    </citation>
    <scope>NUCLEOTIDE SEQUENCE [LARGE SCALE GENOMIC DNA]</scope>
    <source>
        <strain>DSM 18221 / CIP 109841 / QLW-P1DMWA-1</strain>
    </source>
</reference>